<reference key="1">
    <citation type="submission" date="2003-03" db="EMBL/GenBank/DDBJ databases">
        <title>African swine fever virus genomes.</title>
        <authorList>
            <person name="Kutish G.F."/>
            <person name="Rock D.L."/>
        </authorList>
    </citation>
    <scope>NUCLEOTIDE SEQUENCE [LARGE SCALE GENOMIC DNA]</scope>
</reference>
<keyword id="KW-0945">Host-virus interaction</keyword>
<keyword id="KW-1090">Inhibition of host innate immune response by virus</keyword>
<keyword id="KW-1093">Inhibition of host IRF7 by virus</keyword>
<keyword id="KW-1113">Inhibition of host RLR pathway by virus</keyword>
<keyword id="KW-1223">Inhibition of host TBK1 by virus</keyword>
<keyword id="KW-1225">Inhibition of host TLR pathway by virus</keyword>
<keyword id="KW-0899">Viral immunoevasion</keyword>
<name>36011_ASFP4</name>
<sequence length="353" mass="41507">MLPSLQSLTKKVLAGQCVSVDHYHILKCCGLWWHNGPIMLHIRRNRIFIRSTCFSQGIELNIGLMKAVKENNHDLIKLFTEWGADINYGMICALTENTRDLCKELGAKEYLEREYILKIFFDTTRDKTSNNIIFCHEVFSNNPNLRIIDNLDLRGEIMWELRGLMEITFMLDHDDSFSTVLTKYWYAIAVDYDLKDAIRYFYQKYPRLHRWRLMCALFYNNVFDLHELYEIERVRMDIDEMMHIACVQDYSYSAIYYCFIMGANINQAMLVSIQNYNLGNLFFCIDLGANAFEEGKALAEQKGNYLIANALSLKHYNPVISLLSVVTDPEKINRMLKNYHSINMGIFLDYEQR</sequence>
<organism>
    <name type="scientific">African swine fever virus (isolate Tick/South Africa/Pretoriuskop Pr4/1996)</name>
    <name type="common">ASFV</name>
    <dbReference type="NCBI Taxonomy" id="561443"/>
    <lineage>
        <taxon>Viruses</taxon>
        <taxon>Varidnaviria</taxon>
        <taxon>Bamfordvirae</taxon>
        <taxon>Nucleocytoviricota</taxon>
        <taxon>Pokkesviricetes</taxon>
        <taxon>Asfuvirales</taxon>
        <taxon>Asfarviridae</taxon>
        <taxon>Asfivirus</taxon>
        <taxon>African swine fever virus</taxon>
    </lineage>
</organism>
<evidence type="ECO:0000250" key="1">
    <source>
        <dbReference type="UniProtKB" id="P0C9P6"/>
    </source>
</evidence>
<evidence type="ECO:0000305" key="2"/>
<organismHost>
    <name type="scientific">Ornithodoros</name>
    <name type="common">relapsing fever ticks</name>
    <dbReference type="NCBI Taxonomy" id="6937"/>
</organismHost>
<organismHost>
    <name type="scientific">Phacochoerus aethiopicus</name>
    <name type="common">Warthog</name>
    <dbReference type="NCBI Taxonomy" id="85517"/>
</organismHost>
<organismHost>
    <name type="scientific">Phacochoerus africanus</name>
    <name type="common">Warthog</name>
    <dbReference type="NCBI Taxonomy" id="41426"/>
</organismHost>
<organismHost>
    <name type="scientific">Potamochoerus larvatus</name>
    <name type="common">Bushpig</name>
    <dbReference type="NCBI Taxonomy" id="273792"/>
</organismHost>
<organismHost>
    <name type="scientific">Sus scrofa</name>
    <name type="common">Pig</name>
    <dbReference type="NCBI Taxonomy" id="9823"/>
</organismHost>
<accession>P0C9P8</accession>
<protein>
    <recommendedName>
        <fullName>Protein MGF 360-11L</fullName>
    </recommendedName>
</protein>
<comment type="function">
    <text evidence="1">Plays a role in virus cell tropism, and may be required for efficient virus replication in macrophages. In addition, inhibits the phosphorylation of host TBK1 and IRF7 and thereby negatively regulates the host cGAS signaling pathway and antagonizes IFN-mediated antiviral activity.</text>
</comment>
<comment type="subunit">
    <text evidence="1">Interacts with host TBK1 ad IRF7.</text>
</comment>
<comment type="similarity">
    <text evidence="2">Belongs to the asfivirus MGF 360 family.</text>
</comment>
<feature type="chain" id="PRO_0000373278" description="Protein MGF 360-11L">
    <location>
        <begin position="1"/>
        <end position="353"/>
    </location>
</feature>
<gene>
    <name type="ordered locus">Pret-033</name>
</gene>
<proteinExistence type="inferred from homology"/>
<dbReference type="EMBL" id="AY261363">
    <property type="status" value="NOT_ANNOTATED_CDS"/>
    <property type="molecule type" value="Genomic_DNA"/>
</dbReference>
<dbReference type="SMR" id="P0C9P8"/>
<dbReference type="Proteomes" id="UP000000859">
    <property type="component" value="Segment"/>
</dbReference>
<dbReference type="GO" id="GO:0039557">
    <property type="term" value="P:symbiont-mediated suppression of host cytoplasmic pattern recognition receptor signaling pathway via inhibition of IRF7 activity"/>
    <property type="evidence" value="ECO:0007669"/>
    <property type="project" value="UniProtKB-KW"/>
</dbReference>
<dbReference type="GO" id="GO:0039723">
    <property type="term" value="P:symbiont-mediated suppression of host cytoplasmic pattern recognition receptor signaling pathway via inhibition of TBK1 activity"/>
    <property type="evidence" value="ECO:0007669"/>
    <property type="project" value="UniProtKB-KW"/>
</dbReference>
<dbReference type="GO" id="GO:0039722">
    <property type="term" value="P:symbiont-mediated suppression of host toll-like receptor signaling pathway"/>
    <property type="evidence" value="ECO:0007669"/>
    <property type="project" value="UniProtKB-KW"/>
</dbReference>
<dbReference type="GO" id="GO:0042330">
    <property type="term" value="P:taxis"/>
    <property type="evidence" value="ECO:0007669"/>
    <property type="project" value="InterPro"/>
</dbReference>
<dbReference type="InterPro" id="IPR002595">
    <property type="entry name" value="ASFV_MGF360"/>
</dbReference>
<dbReference type="Pfam" id="PF01671">
    <property type="entry name" value="ASFV_360"/>
    <property type="match status" value="1"/>
</dbReference>